<feature type="chain" id="PRO_1000213830" description="Alanine racemase">
    <location>
        <begin position="1"/>
        <end position="378"/>
    </location>
</feature>
<feature type="active site" description="Proton acceptor; specific for D-alanine" evidence="1">
    <location>
        <position position="35"/>
    </location>
</feature>
<feature type="active site" description="Proton acceptor; specific for L-alanine" evidence="1">
    <location>
        <position position="266"/>
    </location>
</feature>
<feature type="binding site" evidence="1">
    <location>
        <position position="133"/>
    </location>
    <ligand>
        <name>substrate</name>
    </ligand>
</feature>
<feature type="binding site" evidence="1">
    <location>
        <position position="314"/>
    </location>
    <ligand>
        <name>substrate</name>
    </ligand>
</feature>
<feature type="modified residue" description="N6-(pyridoxal phosphate)lysine" evidence="1">
    <location>
        <position position="35"/>
    </location>
</feature>
<sequence length="378" mass="38703">MTYPARAVVDLGAIAGNVARLREVAGPAEVMAVVKGDAYGHGLVPVARAALGAGATWLGVAQLGEALTLRAAGVDARTLTWLYAPGAPLAEALRADLDLSVAAPWALDEVVGAARESGVVARVHLKVDTGMGRSGLFLDEWGGLLDAAVRAQAAGEIDVVGVWSHLASADDAESGLTAEQTRVFAEAVRRAEDAGAHLEVRHLANSAGTLAHAATHFDLVRPGIAVVGLSPFGDRTADELGLTPAMRLEAELTIVKHAPAGQGVSYGHEYTTSEATSLAVVPLGYADGIPRHAGGAGPVQVGDTWSRIAGRVCMDQFVLDLGAGANAHAGDVAVLFGSGADGEPTAADWARAADTITYEIVTRLGPRVPRVHVGGRDA</sequence>
<name>ALR_BEUC1</name>
<proteinExistence type="inferred from homology"/>
<keyword id="KW-0413">Isomerase</keyword>
<keyword id="KW-0663">Pyridoxal phosphate</keyword>
<keyword id="KW-1185">Reference proteome</keyword>
<protein>
    <recommendedName>
        <fullName evidence="1">Alanine racemase</fullName>
        <ecNumber evidence="1">5.1.1.1</ecNumber>
    </recommendedName>
</protein>
<organism>
    <name type="scientific">Beutenbergia cavernae (strain ATCC BAA-8 / DSM 12333 / CCUG 43141 / JCM 11478 / NBRC 16432 / NCIMB 13614 / HKI 0122)</name>
    <dbReference type="NCBI Taxonomy" id="471853"/>
    <lineage>
        <taxon>Bacteria</taxon>
        <taxon>Bacillati</taxon>
        <taxon>Actinomycetota</taxon>
        <taxon>Actinomycetes</taxon>
        <taxon>Micrococcales</taxon>
        <taxon>Beutenbergiaceae</taxon>
        <taxon>Beutenbergia</taxon>
    </lineage>
</organism>
<evidence type="ECO:0000255" key="1">
    <source>
        <dbReference type="HAMAP-Rule" id="MF_01201"/>
    </source>
</evidence>
<comment type="function">
    <text evidence="1">Catalyzes the interconversion of L-alanine and D-alanine. May also act on other amino acids.</text>
</comment>
<comment type="catalytic activity">
    <reaction evidence="1">
        <text>L-alanine = D-alanine</text>
        <dbReference type="Rhea" id="RHEA:20249"/>
        <dbReference type="ChEBI" id="CHEBI:57416"/>
        <dbReference type="ChEBI" id="CHEBI:57972"/>
        <dbReference type="EC" id="5.1.1.1"/>
    </reaction>
</comment>
<comment type="cofactor">
    <cofactor evidence="1">
        <name>pyridoxal 5'-phosphate</name>
        <dbReference type="ChEBI" id="CHEBI:597326"/>
    </cofactor>
</comment>
<comment type="pathway">
    <text evidence="1">Amino-acid biosynthesis; D-alanine biosynthesis; D-alanine from L-alanine: step 1/1.</text>
</comment>
<comment type="similarity">
    <text evidence="1">Belongs to the alanine racemase family.</text>
</comment>
<accession>C5BZY7</accession>
<dbReference type="EC" id="5.1.1.1" evidence="1"/>
<dbReference type="EMBL" id="CP001618">
    <property type="protein sequence ID" value="ACQ81317.1"/>
    <property type="molecule type" value="Genomic_DNA"/>
</dbReference>
<dbReference type="RefSeq" id="WP_015883557.1">
    <property type="nucleotide sequence ID" value="NC_012669.1"/>
</dbReference>
<dbReference type="SMR" id="C5BZY7"/>
<dbReference type="STRING" id="471853.Bcav_3073"/>
<dbReference type="KEGG" id="bcv:Bcav_3073"/>
<dbReference type="eggNOG" id="COG0787">
    <property type="taxonomic scope" value="Bacteria"/>
</dbReference>
<dbReference type="HOGENOM" id="CLU_028393_0_0_11"/>
<dbReference type="OrthoDB" id="9813814at2"/>
<dbReference type="UniPathway" id="UPA00042">
    <property type="reaction ID" value="UER00497"/>
</dbReference>
<dbReference type="Proteomes" id="UP000007962">
    <property type="component" value="Chromosome"/>
</dbReference>
<dbReference type="GO" id="GO:0005829">
    <property type="term" value="C:cytosol"/>
    <property type="evidence" value="ECO:0007669"/>
    <property type="project" value="TreeGrafter"/>
</dbReference>
<dbReference type="GO" id="GO:0008784">
    <property type="term" value="F:alanine racemase activity"/>
    <property type="evidence" value="ECO:0007669"/>
    <property type="project" value="UniProtKB-UniRule"/>
</dbReference>
<dbReference type="GO" id="GO:0030170">
    <property type="term" value="F:pyridoxal phosphate binding"/>
    <property type="evidence" value="ECO:0007669"/>
    <property type="project" value="UniProtKB-UniRule"/>
</dbReference>
<dbReference type="GO" id="GO:0030632">
    <property type="term" value="P:D-alanine biosynthetic process"/>
    <property type="evidence" value="ECO:0007669"/>
    <property type="project" value="UniProtKB-UniRule"/>
</dbReference>
<dbReference type="GO" id="GO:0009252">
    <property type="term" value="P:peptidoglycan biosynthetic process"/>
    <property type="evidence" value="ECO:0007669"/>
    <property type="project" value="TreeGrafter"/>
</dbReference>
<dbReference type="CDD" id="cd00430">
    <property type="entry name" value="PLPDE_III_AR"/>
    <property type="match status" value="1"/>
</dbReference>
<dbReference type="FunFam" id="3.20.20.10:FF:000002">
    <property type="entry name" value="Alanine racemase"/>
    <property type="match status" value="1"/>
</dbReference>
<dbReference type="Gene3D" id="3.20.20.10">
    <property type="entry name" value="Alanine racemase"/>
    <property type="match status" value="1"/>
</dbReference>
<dbReference type="Gene3D" id="2.40.37.10">
    <property type="entry name" value="Lyase, Ornithine Decarboxylase, Chain A, domain 1"/>
    <property type="match status" value="1"/>
</dbReference>
<dbReference type="HAMAP" id="MF_01201">
    <property type="entry name" value="Ala_racemase"/>
    <property type="match status" value="1"/>
</dbReference>
<dbReference type="InterPro" id="IPR000821">
    <property type="entry name" value="Ala_racemase"/>
</dbReference>
<dbReference type="InterPro" id="IPR009006">
    <property type="entry name" value="Ala_racemase/Decarboxylase_C"/>
</dbReference>
<dbReference type="InterPro" id="IPR011079">
    <property type="entry name" value="Ala_racemase_C"/>
</dbReference>
<dbReference type="InterPro" id="IPR001608">
    <property type="entry name" value="Ala_racemase_N"/>
</dbReference>
<dbReference type="InterPro" id="IPR020622">
    <property type="entry name" value="Ala_racemase_pyridoxalP-BS"/>
</dbReference>
<dbReference type="InterPro" id="IPR029066">
    <property type="entry name" value="PLP-binding_barrel"/>
</dbReference>
<dbReference type="NCBIfam" id="TIGR00492">
    <property type="entry name" value="alr"/>
    <property type="match status" value="1"/>
</dbReference>
<dbReference type="PANTHER" id="PTHR30511">
    <property type="entry name" value="ALANINE RACEMASE"/>
    <property type="match status" value="1"/>
</dbReference>
<dbReference type="PANTHER" id="PTHR30511:SF0">
    <property type="entry name" value="ALANINE RACEMASE, CATABOLIC-RELATED"/>
    <property type="match status" value="1"/>
</dbReference>
<dbReference type="Pfam" id="PF00842">
    <property type="entry name" value="Ala_racemase_C"/>
    <property type="match status" value="1"/>
</dbReference>
<dbReference type="Pfam" id="PF01168">
    <property type="entry name" value="Ala_racemase_N"/>
    <property type="match status" value="1"/>
</dbReference>
<dbReference type="PRINTS" id="PR00992">
    <property type="entry name" value="ALARACEMASE"/>
</dbReference>
<dbReference type="SMART" id="SM01005">
    <property type="entry name" value="Ala_racemase_C"/>
    <property type="match status" value="1"/>
</dbReference>
<dbReference type="SUPFAM" id="SSF50621">
    <property type="entry name" value="Alanine racemase C-terminal domain-like"/>
    <property type="match status" value="1"/>
</dbReference>
<dbReference type="SUPFAM" id="SSF51419">
    <property type="entry name" value="PLP-binding barrel"/>
    <property type="match status" value="1"/>
</dbReference>
<dbReference type="PROSITE" id="PS00395">
    <property type="entry name" value="ALANINE_RACEMASE"/>
    <property type="match status" value="1"/>
</dbReference>
<reference key="1">
    <citation type="journal article" date="2009" name="Stand. Genomic Sci.">
        <title>Complete genome sequence of Beutenbergia cavernae type strain (HKI 0122).</title>
        <authorList>
            <person name="Land M."/>
            <person name="Pukall R."/>
            <person name="Abt B."/>
            <person name="Goker M."/>
            <person name="Rohde M."/>
            <person name="Glavina Del Rio T."/>
            <person name="Tice H."/>
            <person name="Copeland A."/>
            <person name="Cheng J.F."/>
            <person name="Lucas S."/>
            <person name="Chen F."/>
            <person name="Nolan M."/>
            <person name="Bruce D."/>
            <person name="Goodwin L."/>
            <person name="Pitluck S."/>
            <person name="Ivanova N."/>
            <person name="Mavromatis K."/>
            <person name="Ovchinnikova G."/>
            <person name="Pati A."/>
            <person name="Chen A."/>
            <person name="Palaniappan K."/>
            <person name="Hauser L."/>
            <person name="Chang Y.J."/>
            <person name="Jefferies C.C."/>
            <person name="Saunders E."/>
            <person name="Brettin T."/>
            <person name="Detter J.C."/>
            <person name="Han C."/>
            <person name="Chain P."/>
            <person name="Bristow J."/>
            <person name="Eisen J.A."/>
            <person name="Markowitz V."/>
            <person name="Hugenholtz P."/>
            <person name="Kyrpides N.C."/>
            <person name="Klenk H.P."/>
            <person name="Lapidus A."/>
        </authorList>
    </citation>
    <scope>NUCLEOTIDE SEQUENCE [LARGE SCALE GENOMIC DNA]</scope>
    <source>
        <strain>ATCC BAA-8 / DSM 12333 / CCUG 43141 / JCM 11478 / NBRC 16432 / NCIMB 13614 / HKI 0122</strain>
    </source>
</reference>
<gene>
    <name type="primary">alr</name>
    <name type="ordered locus">Bcav_3073</name>
</gene>